<protein>
    <recommendedName>
        <fullName evidence="1">Protein translocase subunit SecA</fullName>
        <ecNumber evidence="1">7.4.2.8</ecNumber>
    </recommendedName>
</protein>
<sequence>MSLLTQIFGSRNQRLLKQYQKTVREINALEPALEQLSDEALKAKTPEFKERLAKGEDIDKLLPEAFAVCREASKRILKMRHFDVQLIGGMALHYGKIAEMGTGEGKTLMATLPAYLNALAAKGVHVVTVNDYLAQRDAEWMSTLYGWLGLTTGINLSQIDHEAKQTAYNADITYGTNNEFGFDYLRDNMVYDTGDRVQRGLHYAIVDEVDSILIDEARTPLIISGQAENHTDLYHKINEVPPLLSLQIGEETPDGKGKIEVPGDYTKDEKSHQVLLTEAGHEKAEQILTRMGLLPEGASLYDAANITLIHHLYAALRAHTLYHKDQHYVVQNGEVVIVDEFTGRLMTGRRWSEGLHQAVEAKEHVKIQNENQTLASITFQNYFRMYSKLSGMTGTADTEAYEFQEIYKLETVVIPPNRPSQRKDRQDQVYKSSDEKYGAMLKDIQDCYERGQPVLVGTTSIENSELLSGILTKAKLPHNVLNAKQHAREAEIIAQAGRPKAITIATNMAGRGTDIVLGGNVAKQVQIIEANDALSDADKAAQAQKLREEWQSLHDHVVNAGGLHIIGTERHESRRVDNQLRGRSGRQGDPGSSRFYLSLDDALLRIFAGDRVRAIMDRLKMPEGEPIEAGIVSRSIESAQRKVEARNFDIRKQLLEYDDVANDQRKVIYQQRNELLETTDVSEMITSLRQGVFSDLFRTYVPEQSMEEQWDLPGLDAVLRDEWKLDFSLAKVLEAEPTITDEEMLERLLKFTDDVYAEKIEIVGKEAFAGFERSVMLQAVDSHWREHLAALDHLRQGIHLRGYAQKNPKQEYKREAFELFGQMLNLIKDEVVKIVMTVRIQSREEIDAAEEQLSQSHVENVHYQHADFDADAAPEELLAPTAVASEANQTQVNALPKVGRNDPCPCGSGKKYKQCHGRLA</sequence>
<dbReference type="EC" id="7.4.2.8" evidence="1"/>
<dbReference type="EMBL" id="CP000269">
    <property type="protein sequence ID" value="ABR88382.1"/>
    <property type="molecule type" value="Genomic_DNA"/>
</dbReference>
<dbReference type="RefSeq" id="WP_012080854.1">
    <property type="nucleotide sequence ID" value="NC_009659.1"/>
</dbReference>
<dbReference type="SMR" id="A6T2E8"/>
<dbReference type="STRING" id="375286.mma_3005"/>
<dbReference type="KEGG" id="mms:mma_3005"/>
<dbReference type="eggNOG" id="COG0653">
    <property type="taxonomic scope" value="Bacteria"/>
</dbReference>
<dbReference type="HOGENOM" id="CLU_005314_3_0_4"/>
<dbReference type="OrthoDB" id="9805579at2"/>
<dbReference type="Proteomes" id="UP000006388">
    <property type="component" value="Chromosome"/>
</dbReference>
<dbReference type="GO" id="GO:0031522">
    <property type="term" value="C:cell envelope Sec protein transport complex"/>
    <property type="evidence" value="ECO:0007669"/>
    <property type="project" value="TreeGrafter"/>
</dbReference>
<dbReference type="GO" id="GO:0005829">
    <property type="term" value="C:cytosol"/>
    <property type="evidence" value="ECO:0007669"/>
    <property type="project" value="TreeGrafter"/>
</dbReference>
<dbReference type="GO" id="GO:0005886">
    <property type="term" value="C:plasma membrane"/>
    <property type="evidence" value="ECO:0007669"/>
    <property type="project" value="UniProtKB-SubCell"/>
</dbReference>
<dbReference type="GO" id="GO:0005524">
    <property type="term" value="F:ATP binding"/>
    <property type="evidence" value="ECO:0007669"/>
    <property type="project" value="UniProtKB-UniRule"/>
</dbReference>
<dbReference type="GO" id="GO:0046872">
    <property type="term" value="F:metal ion binding"/>
    <property type="evidence" value="ECO:0007669"/>
    <property type="project" value="UniProtKB-KW"/>
</dbReference>
<dbReference type="GO" id="GO:0008564">
    <property type="term" value="F:protein-exporting ATPase activity"/>
    <property type="evidence" value="ECO:0007669"/>
    <property type="project" value="UniProtKB-EC"/>
</dbReference>
<dbReference type="GO" id="GO:0065002">
    <property type="term" value="P:intracellular protein transmembrane transport"/>
    <property type="evidence" value="ECO:0007669"/>
    <property type="project" value="UniProtKB-UniRule"/>
</dbReference>
<dbReference type="GO" id="GO:0017038">
    <property type="term" value="P:protein import"/>
    <property type="evidence" value="ECO:0007669"/>
    <property type="project" value="InterPro"/>
</dbReference>
<dbReference type="GO" id="GO:0006605">
    <property type="term" value="P:protein targeting"/>
    <property type="evidence" value="ECO:0007669"/>
    <property type="project" value="UniProtKB-UniRule"/>
</dbReference>
<dbReference type="GO" id="GO:0043952">
    <property type="term" value="P:protein transport by the Sec complex"/>
    <property type="evidence" value="ECO:0007669"/>
    <property type="project" value="TreeGrafter"/>
</dbReference>
<dbReference type="CDD" id="cd17928">
    <property type="entry name" value="DEXDc_SecA"/>
    <property type="match status" value="1"/>
</dbReference>
<dbReference type="CDD" id="cd18803">
    <property type="entry name" value="SF2_C_secA"/>
    <property type="match status" value="1"/>
</dbReference>
<dbReference type="FunFam" id="3.40.50.300:FF:000113">
    <property type="entry name" value="Preprotein translocase subunit SecA"/>
    <property type="match status" value="1"/>
</dbReference>
<dbReference type="FunFam" id="3.90.1440.10:FF:000001">
    <property type="entry name" value="Preprotein translocase subunit SecA"/>
    <property type="match status" value="1"/>
</dbReference>
<dbReference type="FunFam" id="1.10.3060.10:FF:000003">
    <property type="entry name" value="Protein translocase subunit SecA"/>
    <property type="match status" value="1"/>
</dbReference>
<dbReference type="Gene3D" id="1.10.3060.10">
    <property type="entry name" value="Helical scaffold and wing domains of SecA"/>
    <property type="match status" value="1"/>
</dbReference>
<dbReference type="Gene3D" id="3.40.50.300">
    <property type="entry name" value="P-loop containing nucleotide triphosphate hydrolases"/>
    <property type="match status" value="2"/>
</dbReference>
<dbReference type="Gene3D" id="3.90.1440.10">
    <property type="entry name" value="SecA, preprotein cross-linking domain"/>
    <property type="match status" value="1"/>
</dbReference>
<dbReference type="HAMAP" id="MF_01382">
    <property type="entry name" value="SecA"/>
    <property type="match status" value="1"/>
</dbReference>
<dbReference type="InterPro" id="IPR014001">
    <property type="entry name" value="Helicase_ATP-bd"/>
</dbReference>
<dbReference type="InterPro" id="IPR001650">
    <property type="entry name" value="Helicase_C-like"/>
</dbReference>
<dbReference type="InterPro" id="IPR027417">
    <property type="entry name" value="P-loop_NTPase"/>
</dbReference>
<dbReference type="InterPro" id="IPR004027">
    <property type="entry name" value="SEC_C_motif"/>
</dbReference>
<dbReference type="InterPro" id="IPR000185">
    <property type="entry name" value="SecA"/>
</dbReference>
<dbReference type="InterPro" id="IPR020937">
    <property type="entry name" value="SecA_CS"/>
</dbReference>
<dbReference type="InterPro" id="IPR011115">
    <property type="entry name" value="SecA_DEAD"/>
</dbReference>
<dbReference type="InterPro" id="IPR014018">
    <property type="entry name" value="SecA_motor_DEAD"/>
</dbReference>
<dbReference type="InterPro" id="IPR011130">
    <property type="entry name" value="SecA_preprotein_X-link_dom"/>
</dbReference>
<dbReference type="InterPro" id="IPR044722">
    <property type="entry name" value="SecA_SF2_C"/>
</dbReference>
<dbReference type="InterPro" id="IPR011116">
    <property type="entry name" value="SecA_Wing/Scaffold"/>
</dbReference>
<dbReference type="InterPro" id="IPR036266">
    <property type="entry name" value="SecA_Wing/Scaffold_sf"/>
</dbReference>
<dbReference type="InterPro" id="IPR036670">
    <property type="entry name" value="SecA_X-link_sf"/>
</dbReference>
<dbReference type="NCBIfam" id="NF009538">
    <property type="entry name" value="PRK12904.1"/>
    <property type="match status" value="1"/>
</dbReference>
<dbReference type="NCBIfam" id="TIGR00963">
    <property type="entry name" value="secA"/>
    <property type="match status" value="1"/>
</dbReference>
<dbReference type="PANTHER" id="PTHR30612:SF0">
    <property type="entry name" value="CHLOROPLAST PROTEIN-TRANSPORTING ATPASE"/>
    <property type="match status" value="1"/>
</dbReference>
<dbReference type="PANTHER" id="PTHR30612">
    <property type="entry name" value="SECA INNER MEMBRANE COMPONENT OF SEC PROTEIN SECRETION SYSTEM"/>
    <property type="match status" value="1"/>
</dbReference>
<dbReference type="Pfam" id="PF21090">
    <property type="entry name" value="P-loop_SecA"/>
    <property type="match status" value="1"/>
</dbReference>
<dbReference type="Pfam" id="PF02810">
    <property type="entry name" value="SEC-C"/>
    <property type="match status" value="1"/>
</dbReference>
<dbReference type="Pfam" id="PF07517">
    <property type="entry name" value="SecA_DEAD"/>
    <property type="match status" value="1"/>
</dbReference>
<dbReference type="Pfam" id="PF01043">
    <property type="entry name" value="SecA_PP_bind"/>
    <property type="match status" value="1"/>
</dbReference>
<dbReference type="Pfam" id="PF07516">
    <property type="entry name" value="SecA_SW"/>
    <property type="match status" value="1"/>
</dbReference>
<dbReference type="PRINTS" id="PR00906">
    <property type="entry name" value="SECA"/>
</dbReference>
<dbReference type="SMART" id="SM00957">
    <property type="entry name" value="SecA_DEAD"/>
    <property type="match status" value="1"/>
</dbReference>
<dbReference type="SMART" id="SM00958">
    <property type="entry name" value="SecA_PP_bind"/>
    <property type="match status" value="1"/>
</dbReference>
<dbReference type="SUPFAM" id="SSF81886">
    <property type="entry name" value="Helical scaffold and wing domains of SecA"/>
    <property type="match status" value="1"/>
</dbReference>
<dbReference type="SUPFAM" id="SSF52540">
    <property type="entry name" value="P-loop containing nucleoside triphosphate hydrolases"/>
    <property type="match status" value="2"/>
</dbReference>
<dbReference type="SUPFAM" id="SSF81767">
    <property type="entry name" value="Pre-protein crosslinking domain of SecA"/>
    <property type="match status" value="1"/>
</dbReference>
<dbReference type="PROSITE" id="PS01312">
    <property type="entry name" value="SECA"/>
    <property type="match status" value="1"/>
</dbReference>
<dbReference type="PROSITE" id="PS51196">
    <property type="entry name" value="SECA_MOTOR_DEAD"/>
    <property type="match status" value="1"/>
</dbReference>
<proteinExistence type="inferred from homology"/>
<reference key="1">
    <citation type="journal article" date="2007" name="PLoS Genet.">
        <title>Genome analysis of Minibacterium massiliensis highlights the convergent evolution of water-living bacteria.</title>
        <authorList>
            <person name="Audic S."/>
            <person name="Robert C."/>
            <person name="Campagna B."/>
            <person name="Parinello H."/>
            <person name="Claverie J.-M."/>
            <person name="Raoult D."/>
            <person name="Drancourt M."/>
        </authorList>
    </citation>
    <scope>NUCLEOTIDE SEQUENCE [LARGE SCALE GENOMIC DNA]</scope>
    <source>
        <strain>Marseille</strain>
    </source>
</reference>
<keyword id="KW-0067">ATP-binding</keyword>
<keyword id="KW-0997">Cell inner membrane</keyword>
<keyword id="KW-1003">Cell membrane</keyword>
<keyword id="KW-0963">Cytoplasm</keyword>
<keyword id="KW-0472">Membrane</keyword>
<keyword id="KW-0479">Metal-binding</keyword>
<keyword id="KW-0547">Nucleotide-binding</keyword>
<keyword id="KW-0653">Protein transport</keyword>
<keyword id="KW-1278">Translocase</keyword>
<keyword id="KW-0811">Translocation</keyword>
<keyword id="KW-0813">Transport</keyword>
<keyword id="KW-0862">Zinc</keyword>
<name>SECA_JANMA</name>
<accession>A6T2E8</accession>
<organism>
    <name type="scientific">Janthinobacterium sp. (strain Marseille)</name>
    <name type="common">Minibacterium massiliensis</name>
    <dbReference type="NCBI Taxonomy" id="375286"/>
    <lineage>
        <taxon>Bacteria</taxon>
        <taxon>Pseudomonadati</taxon>
        <taxon>Pseudomonadota</taxon>
        <taxon>Betaproteobacteria</taxon>
        <taxon>Burkholderiales</taxon>
        <taxon>Oxalobacteraceae</taxon>
        <taxon>Janthinobacterium</taxon>
    </lineage>
</organism>
<evidence type="ECO:0000255" key="1">
    <source>
        <dbReference type="HAMAP-Rule" id="MF_01382"/>
    </source>
</evidence>
<gene>
    <name evidence="1" type="primary">secA</name>
    <name type="ordered locus">mma_3005</name>
</gene>
<comment type="function">
    <text evidence="1">Part of the Sec protein translocase complex. Interacts with the SecYEG preprotein conducting channel. Has a central role in coupling the hydrolysis of ATP to the transfer of proteins into and across the cell membrane, serving both as a receptor for the preprotein-SecB complex and as an ATP-driven molecular motor driving the stepwise translocation of polypeptide chains across the membrane.</text>
</comment>
<comment type="catalytic activity">
    <reaction evidence="1">
        <text>ATP + H2O + cellular proteinSide 1 = ADP + phosphate + cellular proteinSide 2.</text>
        <dbReference type="EC" id="7.4.2.8"/>
    </reaction>
</comment>
<comment type="cofactor">
    <cofactor evidence="1">
        <name>Zn(2+)</name>
        <dbReference type="ChEBI" id="CHEBI:29105"/>
    </cofactor>
    <text evidence="1">May bind 1 zinc ion per subunit.</text>
</comment>
<comment type="subunit">
    <text evidence="1">Monomer and homodimer. Part of the essential Sec protein translocation apparatus which comprises SecA, SecYEG and auxiliary proteins SecDF-YajC and YidC.</text>
</comment>
<comment type="subcellular location">
    <subcellularLocation>
        <location evidence="1">Cell inner membrane</location>
        <topology evidence="1">Peripheral membrane protein</topology>
        <orientation evidence="1">Cytoplasmic side</orientation>
    </subcellularLocation>
    <subcellularLocation>
        <location evidence="1">Cytoplasm</location>
    </subcellularLocation>
    <text evidence="1">Distribution is 50-50.</text>
</comment>
<comment type="similarity">
    <text evidence="1">Belongs to the SecA family.</text>
</comment>
<feature type="chain" id="PRO_0000320833" description="Protein translocase subunit SecA">
    <location>
        <begin position="1"/>
        <end position="920"/>
    </location>
</feature>
<feature type="binding site" evidence="1">
    <location>
        <position position="85"/>
    </location>
    <ligand>
        <name>ATP</name>
        <dbReference type="ChEBI" id="CHEBI:30616"/>
    </ligand>
</feature>
<feature type="binding site" evidence="1">
    <location>
        <begin position="103"/>
        <end position="107"/>
    </location>
    <ligand>
        <name>ATP</name>
        <dbReference type="ChEBI" id="CHEBI:30616"/>
    </ligand>
</feature>
<feature type="binding site" evidence="1">
    <location>
        <position position="514"/>
    </location>
    <ligand>
        <name>ATP</name>
        <dbReference type="ChEBI" id="CHEBI:30616"/>
    </ligand>
</feature>
<feature type="binding site" evidence="1">
    <location>
        <position position="904"/>
    </location>
    <ligand>
        <name>Zn(2+)</name>
        <dbReference type="ChEBI" id="CHEBI:29105"/>
    </ligand>
</feature>
<feature type="binding site" evidence="1">
    <location>
        <position position="906"/>
    </location>
    <ligand>
        <name>Zn(2+)</name>
        <dbReference type="ChEBI" id="CHEBI:29105"/>
    </ligand>
</feature>
<feature type="binding site" evidence="1">
    <location>
        <position position="915"/>
    </location>
    <ligand>
        <name>Zn(2+)</name>
        <dbReference type="ChEBI" id="CHEBI:29105"/>
    </ligand>
</feature>
<feature type="binding site" evidence="1">
    <location>
        <position position="916"/>
    </location>
    <ligand>
        <name>Zn(2+)</name>
        <dbReference type="ChEBI" id="CHEBI:29105"/>
    </ligand>
</feature>